<reference key="1">
    <citation type="journal article" date="2009" name="J. Bacteriol.">
        <title>Complete genome sequence of Macrococcus caseolyticus strain JCSCS5402, reflecting the ancestral genome of the human-pathogenic staphylococci.</title>
        <authorList>
            <person name="Baba T."/>
            <person name="Kuwahara-Arai K."/>
            <person name="Uchiyama I."/>
            <person name="Takeuchi F."/>
            <person name="Ito T."/>
            <person name="Hiramatsu K."/>
        </authorList>
    </citation>
    <scope>NUCLEOTIDE SEQUENCE [LARGE SCALE GENOMIC DNA]</scope>
    <source>
        <strain>JCSC5402</strain>
    </source>
</reference>
<gene>
    <name evidence="1" type="primary">prmA</name>
    <name type="ordered locus">MCCL_1230</name>
</gene>
<accession>B9E6W9</accession>
<protein>
    <recommendedName>
        <fullName evidence="1">Ribosomal protein L11 methyltransferase</fullName>
        <shortName evidence="1">L11 Mtase</shortName>
        <ecNumber evidence="1">2.1.1.-</ecNumber>
    </recommendedName>
</protein>
<comment type="function">
    <text evidence="1">Methylates ribosomal protein L11.</text>
</comment>
<comment type="catalytic activity">
    <reaction evidence="1">
        <text>L-lysyl-[protein] + 3 S-adenosyl-L-methionine = N(6),N(6),N(6)-trimethyl-L-lysyl-[protein] + 3 S-adenosyl-L-homocysteine + 3 H(+)</text>
        <dbReference type="Rhea" id="RHEA:54192"/>
        <dbReference type="Rhea" id="RHEA-COMP:9752"/>
        <dbReference type="Rhea" id="RHEA-COMP:13826"/>
        <dbReference type="ChEBI" id="CHEBI:15378"/>
        <dbReference type="ChEBI" id="CHEBI:29969"/>
        <dbReference type="ChEBI" id="CHEBI:57856"/>
        <dbReference type="ChEBI" id="CHEBI:59789"/>
        <dbReference type="ChEBI" id="CHEBI:61961"/>
    </reaction>
</comment>
<comment type="subcellular location">
    <subcellularLocation>
        <location evidence="1">Cytoplasm</location>
    </subcellularLocation>
</comment>
<comment type="similarity">
    <text evidence="1">Belongs to the methyltransferase superfamily. PrmA family.</text>
</comment>
<dbReference type="EC" id="2.1.1.-" evidence="1"/>
<dbReference type="EMBL" id="AP009484">
    <property type="protein sequence ID" value="BAH17937.1"/>
    <property type="molecule type" value="Genomic_DNA"/>
</dbReference>
<dbReference type="RefSeq" id="WP_012657135.1">
    <property type="nucleotide sequence ID" value="NC_011999.1"/>
</dbReference>
<dbReference type="SMR" id="B9E6W9"/>
<dbReference type="STRING" id="458233.MCCL_1230"/>
<dbReference type="KEGG" id="mcl:MCCL_1230"/>
<dbReference type="eggNOG" id="COG2264">
    <property type="taxonomic scope" value="Bacteria"/>
</dbReference>
<dbReference type="HOGENOM" id="CLU_049382_0_1_9"/>
<dbReference type="OrthoDB" id="9785995at2"/>
<dbReference type="Proteomes" id="UP000001383">
    <property type="component" value="Chromosome"/>
</dbReference>
<dbReference type="GO" id="GO:0005737">
    <property type="term" value="C:cytoplasm"/>
    <property type="evidence" value="ECO:0007669"/>
    <property type="project" value="UniProtKB-SubCell"/>
</dbReference>
<dbReference type="GO" id="GO:0016279">
    <property type="term" value="F:protein-lysine N-methyltransferase activity"/>
    <property type="evidence" value="ECO:0007669"/>
    <property type="project" value="RHEA"/>
</dbReference>
<dbReference type="GO" id="GO:0032259">
    <property type="term" value="P:methylation"/>
    <property type="evidence" value="ECO:0007669"/>
    <property type="project" value="UniProtKB-KW"/>
</dbReference>
<dbReference type="CDD" id="cd02440">
    <property type="entry name" value="AdoMet_MTases"/>
    <property type="match status" value="1"/>
</dbReference>
<dbReference type="Gene3D" id="3.40.50.150">
    <property type="entry name" value="Vaccinia Virus protein VP39"/>
    <property type="match status" value="1"/>
</dbReference>
<dbReference type="HAMAP" id="MF_00735">
    <property type="entry name" value="Methyltr_PrmA"/>
    <property type="match status" value="1"/>
</dbReference>
<dbReference type="InterPro" id="IPR050078">
    <property type="entry name" value="Ribosomal_L11_MeTrfase_PrmA"/>
</dbReference>
<dbReference type="InterPro" id="IPR004498">
    <property type="entry name" value="Ribosomal_PrmA_MeTrfase"/>
</dbReference>
<dbReference type="InterPro" id="IPR029063">
    <property type="entry name" value="SAM-dependent_MTases_sf"/>
</dbReference>
<dbReference type="NCBIfam" id="TIGR00406">
    <property type="entry name" value="prmA"/>
    <property type="match status" value="1"/>
</dbReference>
<dbReference type="PANTHER" id="PTHR43648">
    <property type="entry name" value="ELECTRON TRANSFER FLAVOPROTEIN BETA SUBUNIT LYSINE METHYLTRANSFERASE"/>
    <property type="match status" value="1"/>
</dbReference>
<dbReference type="PANTHER" id="PTHR43648:SF1">
    <property type="entry name" value="ELECTRON TRANSFER FLAVOPROTEIN BETA SUBUNIT LYSINE METHYLTRANSFERASE"/>
    <property type="match status" value="1"/>
</dbReference>
<dbReference type="Pfam" id="PF06325">
    <property type="entry name" value="PrmA"/>
    <property type="match status" value="1"/>
</dbReference>
<dbReference type="PIRSF" id="PIRSF000401">
    <property type="entry name" value="RPL11_MTase"/>
    <property type="match status" value="1"/>
</dbReference>
<dbReference type="SUPFAM" id="SSF53335">
    <property type="entry name" value="S-adenosyl-L-methionine-dependent methyltransferases"/>
    <property type="match status" value="1"/>
</dbReference>
<feature type="chain" id="PRO_1000192644" description="Ribosomal protein L11 methyltransferase">
    <location>
        <begin position="1"/>
        <end position="311"/>
    </location>
</feature>
<feature type="binding site" evidence="1">
    <location>
        <position position="160"/>
    </location>
    <ligand>
        <name>S-adenosyl-L-methionine</name>
        <dbReference type="ChEBI" id="CHEBI:59789"/>
    </ligand>
</feature>
<feature type="binding site" evidence="1">
    <location>
        <position position="181"/>
    </location>
    <ligand>
        <name>S-adenosyl-L-methionine</name>
        <dbReference type="ChEBI" id="CHEBI:59789"/>
    </ligand>
</feature>
<feature type="binding site" evidence="1">
    <location>
        <position position="203"/>
    </location>
    <ligand>
        <name>S-adenosyl-L-methionine</name>
        <dbReference type="ChEBI" id="CHEBI:59789"/>
    </ligand>
</feature>
<feature type="binding site" evidence="1">
    <location>
        <position position="246"/>
    </location>
    <ligand>
        <name>S-adenosyl-L-methionine</name>
        <dbReference type="ChEBI" id="CHEBI:59789"/>
    </ligand>
</feature>
<keyword id="KW-0963">Cytoplasm</keyword>
<keyword id="KW-0489">Methyltransferase</keyword>
<keyword id="KW-1185">Reference proteome</keyword>
<keyword id="KW-0949">S-adenosyl-L-methionine</keyword>
<keyword id="KW-0808">Transferase</keyword>
<evidence type="ECO:0000255" key="1">
    <source>
        <dbReference type="HAMAP-Rule" id="MF_00735"/>
    </source>
</evidence>
<sequence length="311" mass="34688">MNYVEITMMINHELEPFIADILNEVGANGVVIEDSLELQKGRIETFGEIYELNPDDFPEEDVRVKVYFSELDYDASVIEQIKEKVDALNDVDVTRLEFSTHTVQEEDWANEWKNHFHAFKVSDKFVIVPSWESYDGLQDGEHAIHLDPGMAFGTGDHATTSMCLKLIEKYVEKGQSIVDVGTGSGILSIAAHKLGAKPIKALDLDSVAVKVAEDNFEKNDCLDAIQAEPGNLLKGETEKRDVIFANILAHIVDMMIDDSYALLNDNGLLITSGIIEEKEEMIIDHLKGVGYTIVEVMRDSGWVAIAARKEA</sequence>
<name>PRMA_MACCJ</name>
<organism>
    <name type="scientific">Macrococcus caseolyticus (strain JCSC5402)</name>
    <name type="common">Macrococcoides caseolyticum</name>
    <dbReference type="NCBI Taxonomy" id="458233"/>
    <lineage>
        <taxon>Bacteria</taxon>
        <taxon>Bacillati</taxon>
        <taxon>Bacillota</taxon>
        <taxon>Bacilli</taxon>
        <taxon>Bacillales</taxon>
        <taxon>Staphylococcaceae</taxon>
        <taxon>Macrococcoides</taxon>
    </lineage>
</organism>
<proteinExistence type="inferred from homology"/>